<protein>
    <recommendedName>
        <fullName evidence="1">Large ribosomal subunit protein uL3</fullName>
    </recommendedName>
    <alternativeName>
        <fullName evidence="2">50S ribosomal protein L3</fullName>
    </alternativeName>
</protein>
<dbReference type="EMBL" id="CP000243">
    <property type="protein sequence ID" value="ABE09212.1"/>
    <property type="molecule type" value="Genomic_DNA"/>
</dbReference>
<dbReference type="RefSeq" id="WP_000579833.1">
    <property type="nucleotide sequence ID" value="NZ_CP064825.1"/>
</dbReference>
<dbReference type="SMR" id="Q1R602"/>
<dbReference type="GeneID" id="86948184"/>
<dbReference type="KEGG" id="eci:UTI89_C3775"/>
<dbReference type="HOGENOM" id="CLU_044142_4_1_6"/>
<dbReference type="Proteomes" id="UP000001952">
    <property type="component" value="Chromosome"/>
</dbReference>
<dbReference type="GO" id="GO:0022625">
    <property type="term" value="C:cytosolic large ribosomal subunit"/>
    <property type="evidence" value="ECO:0007669"/>
    <property type="project" value="TreeGrafter"/>
</dbReference>
<dbReference type="GO" id="GO:0019843">
    <property type="term" value="F:rRNA binding"/>
    <property type="evidence" value="ECO:0007669"/>
    <property type="project" value="UniProtKB-UniRule"/>
</dbReference>
<dbReference type="GO" id="GO:0003735">
    <property type="term" value="F:structural constituent of ribosome"/>
    <property type="evidence" value="ECO:0007669"/>
    <property type="project" value="InterPro"/>
</dbReference>
<dbReference type="GO" id="GO:0006412">
    <property type="term" value="P:translation"/>
    <property type="evidence" value="ECO:0007669"/>
    <property type="project" value="UniProtKB-UniRule"/>
</dbReference>
<dbReference type="FunFam" id="2.40.30.10:FF:000004">
    <property type="entry name" value="50S ribosomal protein L3"/>
    <property type="match status" value="1"/>
</dbReference>
<dbReference type="FunFam" id="3.30.160.810:FF:000001">
    <property type="entry name" value="50S ribosomal protein L3"/>
    <property type="match status" value="1"/>
</dbReference>
<dbReference type="Gene3D" id="3.30.160.810">
    <property type="match status" value="1"/>
</dbReference>
<dbReference type="Gene3D" id="2.40.30.10">
    <property type="entry name" value="Translation factors"/>
    <property type="match status" value="1"/>
</dbReference>
<dbReference type="HAMAP" id="MF_01325_B">
    <property type="entry name" value="Ribosomal_uL3_B"/>
    <property type="match status" value="1"/>
</dbReference>
<dbReference type="InterPro" id="IPR000597">
    <property type="entry name" value="Ribosomal_uL3"/>
</dbReference>
<dbReference type="InterPro" id="IPR019927">
    <property type="entry name" value="Ribosomal_uL3_bac/org-type"/>
</dbReference>
<dbReference type="InterPro" id="IPR019926">
    <property type="entry name" value="Ribosomal_uL3_CS"/>
</dbReference>
<dbReference type="InterPro" id="IPR009000">
    <property type="entry name" value="Transl_B-barrel_sf"/>
</dbReference>
<dbReference type="NCBIfam" id="TIGR03625">
    <property type="entry name" value="L3_bact"/>
    <property type="match status" value="1"/>
</dbReference>
<dbReference type="PANTHER" id="PTHR11229">
    <property type="entry name" value="50S RIBOSOMAL PROTEIN L3"/>
    <property type="match status" value="1"/>
</dbReference>
<dbReference type="PANTHER" id="PTHR11229:SF16">
    <property type="entry name" value="LARGE RIBOSOMAL SUBUNIT PROTEIN UL3C"/>
    <property type="match status" value="1"/>
</dbReference>
<dbReference type="Pfam" id="PF00297">
    <property type="entry name" value="Ribosomal_L3"/>
    <property type="match status" value="1"/>
</dbReference>
<dbReference type="SUPFAM" id="SSF50447">
    <property type="entry name" value="Translation proteins"/>
    <property type="match status" value="1"/>
</dbReference>
<dbReference type="PROSITE" id="PS00474">
    <property type="entry name" value="RIBOSOMAL_L3"/>
    <property type="match status" value="1"/>
</dbReference>
<feature type="chain" id="PRO_1000052045" description="Large ribosomal subunit protein uL3">
    <location>
        <begin position="1"/>
        <end position="209"/>
    </location>
</feature>
<feature type="modified residue" description="N5-methylglutamine" evidence="1">
    <location>
        <position position="150"/>
    </location>
</feature>
<comment type="function">
    <text evidence="1">One of the primary rRNA binding proteins, it binds directly near the 3'-end of the 23S rRNA, where it nucleates assembly of the 50S subunit.</text>
</comment>
<comment type="subunit">
    <text evidence="1">Part of the 50S ribosomal subunit. Forms a cluster with proteins L14 and L19.</text>
</comment>
<comment type="PTM">
    <text evidence="1">Methylated by PrmB.</text>
</comment>
<comment type="similarity">
    <text evidence="1">Belongs to the universal ribosomal protein uL3 family.</text>
</comment>
<reference key="1">
    <citation type="journal article" date="2006" name="Proc. Natl. Acad. Sci. U.S.A.">
        <title>Identification of genes subject to positive selection in uropathogenic strains of Escherichia coli: a comparative genomics approach.</title>
        <authorList>
            <person name="Chen S.L."/>
            <person name="Hung C.-S."/>
            <person name="Xu J."/>
            <person name="Reigstad C.S."/>
            <person name="Magrini V."/>
            <person name="Sabo A."/>
            <person name="Blasiar D."/>
            <person name="Bieri T."/>
            <person name="Meyer R.R."/>
            <person name="Ozersky P."/>
            <person name="Armstrong J.R."/>
            <person name="Fulton R.S."/>
            <person name="Latreille J.P."/>
            <person name="Spieth J."/>
            <person name="Hooton T.M."/>
            <person name="Mardis E.R."/>
            <person name="Hultgren S.J."/>
            <person name="Gordon J.I."/>
        </authorList>
    </citation>
    <scope>NUCLEOTIDE SEQUENCE [LARGE SCALE GENOMIC DNA]</scope>
    <source>
        <strain>UTI89 / UPEC</strain>
    </source>
</reference>
<name>RL3_ECOUT</name>
<sequence>MIGLVGKKVGMTRIFTEDGVSIPVTVIEVEANRVTQVKDLANDGYRAIQVTTGAKKANRVTKPEAGHFAKAGVEAGRGLWEFRLAEGEEFTVGQSISVELFADVKKVDVTGTSKGKGFAGTVKRWNFRTQDATHGNSLSHRVPGSIGQNQTPGKVFKGKKMAGQMGNERVTVQSLDVVRVDAERNLLLVKGAVPGATGSDLIVKPAVKA</sequence>
<evidence type="ECO:0000255" key="1">
    <source>
        <dbReference type="HAMAP-Rule" id="MF_01325"/>
    </source>
</evidence>
<evidence type="ECO:0000305" key="2"/>
<accession>Q1R602</accession>
<proteinExistence type="inferred from homology"/>
<organism>
    <name type="scientific">Escherichia coli (strain UTI89 / UPEC)</name>
    <dbReference type="NCBI Taxonomy" id="364106"/>
    <lineage>
        <taxon>Bacteria</taxon>
        <taxon>Pseudomonadati</taxon>
        <taxon>Pseudomonadota</taxon>
        <taxon>Gammaproteobacteria</taxon>
        <taxon>Enterobacterales</taxon>
        <taxon>Enterobacteriaceae</taxon>
        <taxon>Escherichia</taxon>
    </lineage>
</organism>
<gene>
    <name evidence="1" type="primary">rplC</name>
    <name type="ordered locus">UTI89_C3775</name>
</gene>
<keyword id="KW-0488">Methylation</keyword>
<keyword id="KW-0687">Ribonucleoprotein</keyword>
<keyword id="KW-0689">Ribosomal protein</keyword>
<keyword id="KW-0694">RNA-binding</keyword>
<keyword id="KW-0699">rRNA-binding</keyword>